<accession>W8NQ71</accession>
<name>HYD3_BIOOC</name>
<keyword id="KW-0134">Cell wall</keyword>
<keyword id="KW-1015">Disulfide bond</keyword>
<keyword id="KW-0964">Secreted</keyword>
<keyword id="KW-0732">Signal</keyword>
<dbReference type="EMBL" id="KF834269">
    <property type="protein sequence ID" value="AHL20220.1"/>
    <property type="molecule type" value="Genomic_DNA"/>
</dbReference>
<dbReference type="EMBL" id="CDPU01000063">
    <property type="protein sequence ID" value="CEO56267.1"/>
    <property type="molecule type" value="Genomic_DNA"/>
</dbReference>
<dbReference type="GO" id="GO:0005576">
    <property type="term" value="C:extracellular region"/>
    <property type="evidence" value="ECO:0007669"/>
    <property type="project" value="UniProtKB-KW"/>
</dbReference>
<dbReference type="CDD" id="cd23508">
    <property type="entry name" value="hydrophobin_II"/>
    <property type="match status" value="1"/>
</dbReference>
<dbReference type="Gene3D" id="3.20.120.10">
    <property type="entry name" value="Hydrophobin"/>
    <property type="match status" value="1"/>
</dbReference>
<dbReference type="InterPro" id="IPR010636">
    <property type="entry name" value="Cerato-ulmin_hydrophobin"/>
</dbReference>
<dbReference type="InterPro" id="IPR036686">
    <property type="entry name" value="Hydrophobin_sf"/>
</dbReference>
<dbReference type="PANTHER" id="PTHR42341">
    <property type="entry name" value="HYDROPHOBIN"/>
    <property type="match status" value="1"/>
</dbReference>
<dbReference type="PANTHER" id="PTHR42341:SF1">
    <property type="entry name" value="HYDROPHOBIN"/>
    <property type="match status" value="1"/>
</dbReference>
<dbReference type="Pfam" id="PF06766">
    <property type="entry name" value="Hydrophobin_2"/>
    <property type="match status" value="1"/>
</dbReference>
<dbReference type="SUPFAM" id="SSF101751">
    <property type="entry name" value="Hydrophobin II, HfbII"/>
    <property type="match status" value="1"/>
</dbReference>
<protein>
    <recommendedName>
        <fullName evidence="4">Class II hydrophobin 3</fullName>
    </recommendedName>
</protein>
<gene>
    <name evidence="4" type="primary">Hyd3</name>
    <name type="ORF">BN869_000012325_1</name>
</gene>
<proteinExistence type="evidence at transcript level"/>
<evidence type="ECO:0000250" key="1">
    <source>
        <dbReference type="UniProtKB" id="P79073"/>
    </source>
</evidence>
<evidence type="ECO:0000255" key="2"/>
<evidence type="ECO:0000269" key="3">
    <source>
    </source>
</evidence>
<evidence type="ECO:0000303" key="4">
    <source>
    </source>
</evidence>
<evidence type="ECO:0000305" key="5"/>
<feature type="signal peptide" evidence="2">
    <location>
        <begin position="1"/>
        <end position="18"/>
    </location>
</feature>
<feature type="chain" id="PRO_5007737290" description="Class II hydrophobin 3">
    <location>
        <begin position="19"/>
        <end position="99"/>
    </location>
</feature>
<feature type="disulfide bond" evidence="1">
    <location>
        <begin position="31"/>
        <end position="79"/>
    </location>
</feature>
<feature type="disulfide bond" evidence="1">
    <location>
        <begin position="40"/>
        <end position="70"/>
    </location>
</feature>
<feature type="disulfide bond" evidence="1">
    <location>
        <begin position="41"/>
        <end position="53"/>
    </location>
</feature>
<comment type="function">
    <text evidence="3 5">Aerial growth, conidiation, and dispersal of filamentous fungi in the environment rely upon a capability of their secreting small amphipathic proteins called hydrophobins (HPBs) with low sequence identity. Class I can self-assemble into an outermost layer of rodlet bundles on aerial cell surfaces, conferring cellular hydrophobicity that supports fungal growth, development and dispersal; whereas Class II form highly ordered films at water-air interfaces through intermolecular interactions but contribute nothing to the rodlet structure (Probable). Hyd3 is a class II hydrophobin required for barley root colonization (PubMed:24483277). Hyd1 and Hyd3 are jointly required for conidial hydrophobicity and dispersal, but seem not to be involved in mycelia hydrophobicity (PubMed:24483277). Inhibits conidial germination in environments not suitable for mycelial growth (PubMed:24483277). Plays probably a role in intraspecific signaling or hyphal fusion (PubMed:24483277).</text>
</comment>
<comment type="subunit">
    <text evidence="1">Homodimer (By similarity). Homodimers further self-assemble to form highly ordered films at water-air interfaces through intermolecular interactions (By similarity).</text>
</comment>
<comment type="subcellular location">
    <subcellularLocation>
        <location evidence="1">Secreted</location>
    </subcellularLocation>
    <subcellularLocation>
        <location evidence="1">Secreted</location>
        <location evidence="1">Cell wall</location>
    </subcellularLocation>
</comment>
<comment type="induction">
    <text evidence="3">Expression is not affected by carbon nor nitrogen starvation (PubMed:24483277). Expression is induced during Bionectria ochroleuca self interaction (PubMed:24483277).</text>
</comment>
<comment type="disruption phenotype">
    <text evidence="3">Leads to increased growth rates, conidiation and enhanced tolerances of conidia to abiotic stresses (PubMed:24483277). Reduces Arabisopsis thaliana root colonization ability (PubMed:24483277).</text>
</comment>
<comment type="similarity">
    <text evidence="5">Belongs to the cerato-ulmin hydrophobin family.</text>
</comment>
<organism>
    <name type="scientific">Bionectria ochroleuca</name>
    <name type="common">Gliocladium roseum</name>
    <dbReference type="NCBI Taxonomy" id="29856"/>
    <lineage>
        <taxon>Eukaryota</taxon>
        <taxon>Fungi</taxon>
        <taxon>Dikarya</taxon>
        <taxon>Ascomycota</taxon>
        <taxon>Pezizomycotina</taxon>
        <taxon>Sordariomycetes</taxon>
        <taxon>Hypocreomycetidae</taxon>
        <taxon>Hypocreales</taxon>
        <taxon>Bionectriaceae</taxon>
        <taxon>Clonostachys</taxon>
    </lineage>
</organism>
<reference key="1">
    <citation type="journal article" date="2014" name="BMC Microbiol.">
        <title>Hydrophobins are required for conidial hydrophobicity and plant root colonization in the fungal biocontrol agent Clonostachys rosea.</title>
        <authorList>
            <person name="Dubey M.K."/>
            <person name="Jensen D.F."/>
            <person name="Karlsson M."/>
        </authorList>
    </citation>
    <scope>NUCLEOTIDE SEQUENCE [GENOMIC DNA]</scope>
    <scope>INDUCTION</scope>
    <scope>FUNCTION</scope>
    <scope>DISRUPTION PHENOTYPE</scope>
    <source>
        <strain>IK726</strain>
    </source>
</reference>
<sequence>MRIDILATAALLAQLASASPAPAKRQTYIACSGLYGTAQCCATDVLGLVNLDCGNPPSLPTSPDEFSSVCSAIGQRARCCVLPIVSFMRLIIQDYPISY</sequence>